<dbReference type="EMBL" id="CP000885">
    <property type="protein sequence ID" value="ABX40696.1"/>
    <property type="molecule type" value="Genomic_DNA"/>
</dbReference>
<dbReference type="RefSeq" id="WP_012198339.1">
    <property type="nucleotide sequence ID" value="NC_010001.1"/>
</dbReference>
<dbReference type="SMR" id="A9KSQ2"/>
<dbReference type="STRING" id="357809.Cphy_0309"/>
<dbReference type="KEGG" id="cpy:Cphy_0309"/>
<dbReference type="eggNOG" id="COG1551">
    <property type="taxonomic scope" value="Bacteria"/>
</dbReference>
<dbReference type="HOGENOM" id="CLU_164837_0_1_9"/>
<dbReference type="OrthoDB" id="9809061at2"/>
<dbReference type="Proteomes" id="UP000000370">
    <property type="component" value="Chromosome"/>
</dbReference>
<dbReference type="GO" id="GO:0005829">
    <property type="term" value="C:cytosol"/>
    <property type="evidence" value="ECO:0007669"/>
    <property type="project" value="TreeGrafter"/>
</dbReference>
<dbReference type="GO" id="GO:0048027">
    <property type="term" value="F:mRNA 5'-UTR binding"/>
    <property type="evidence" value="ECO:0007669"/>
    <property type="project" value="UniProtKB-UniRule"/>
</dbReference>
<dbReference type="GO" id="GO:0044781">
    <property type="term" value="P:bacterial-type flagellum organization"/>
    <property type="evidence" value="ECO:0007669"/>
    <property type="project" value="UniProtKB-KW"/>
</dbReference>
<dbReference type="GO" id="GO:0006402">
    <property type="term" value="P:mRNA catabolic process"/>
    <property type="evidence" value="ECO:0007669"/>
    <property type="project" value="InterPro"/>
</dbReference>
<dbReference type="GO" id="GO:0045947">
    <property type="term" value="P:negative regulation of translational initiation"/>
    <property type="evidence" value="ECO:0007669"/>
    <property type="project" value="UniProtKB-UniRule"/>
</dbReference>
<dbReference type="GO" id="GO:1902208">
    <property type="term" value="P:regulation of bacterial-type flagellum assembly"/>
    <property type="evidence" value="ECO:0007669"/>
    <property type="project" value="UniProtKB-UniRule"/>
</dbReference>
<dbReference type="GO" id="GO:0006109">
    <property type="term" value="P:regulation of carbohydrate metabolic process"/>
    <property type="evidence" value="ECO:0007669"/>
    <property type="project" value="InterPro"/>
</dbReference>
<dbReference type="FunFam" id="2.60.40.4380:FF:000002">
    <property type="entry name" value="Translational regulator CsrA"/>
    <property type="match status" value="1"/>
</dbReference>
<dbReference type="Gene3D" id="2.60.40.4380">
    <property type="entry name" value="Translational regulator CsrA"/>
    <property type="match status" value="1"/>
</dbReference>
<dbReference type="HAMAP" id="MF_00167">
    <property type="entry name" value="CsrA"/>
    <property type="match status" value="1"/>
</dbReference>
<dbReference type="InterPro" id="IPR003751">
    <property type="entry name" value="CsrA"/>
</dbReference>
<dbReference type="InterPro" id="IPR036107">
    <property type="entry name" value="CsrA_sf"/>
</dbReference>
<dbReference type="NCBIfam" id="TIGR00202">
    <property type="entry name" value="csrA"/>
    <property type="match status" value="1"/>
</dbReference>
<dbReference type="NCBIfam" id="NF002469">
    <property type="entry name" value="PRK01712.1"/>
    <property type="match status" value="1"/>
</dbReference>
<dbReference type="PANTHER" id="PTHR34984">
    <property type="entry name" value="CARBON STORAGE REGULATOR"/>
    <property type="match status" value="1"/>
</dbReference>
<dbReference type="PANTHER" id="PTHR34984:SF1">
    <property type="entry name" value="CARBON STORAGE REGULATOR"/>
    <property type="match status" value="1"/>
</dbReference>
<dbReference type="Pfam" id="PF02599">
    <property type="entry name" value="CsrA"/>
    <property type="match status" value="1"/>
</dbReference>
<dbReference type="SUPFAM" id="SSF117130">
    <property type="entry name" value="CsrA-like"/>
    <property type="match status" value="1"/>
</dbReference>
<sequence length="72" mass="8015">MLALSRKLNESIMLGNDIEITILEIKGDQVKIGIKAPKSVPIYRKEIYLQIQESNKEAIDGGVSLEAISKLF</sequence>
<feature type="chain" id="PRO_1000076990" description="Translational regulator CsrA">
    <location>
        <begin position="1"/>
        <end position="72"/>
    </location>
</feature>
<gene>
    <name evidence="1" type="primary">csrA</name>
    <name type="ordered locus">Cphy_0309</name>
</gene>
<comment type="function">
    <text evidence="1">A translational regulator that binds mRNA to regulate translation initiation and/or mRNA stability. Usually binds in the 5'-UTR at or near the Shine-Dalgarno sequence preventing ribosome-binding, thus repressing translation. Its main target seems to be the major flagellin gene, while its function is anatagonized by FliW.</text>
</comment>
<comment type="subunit">
    <text evidence="1">Homodimer; the beta-strands of each monomer intercalate to form a hydrophobic core, while the alpha-helices form wings that extend away from the core.</text>
</comment>
<comment type="subcellular location">
    <subcellularLocation>
        <location evidence="1">Cytoplasm</location>
    </subcellularLocation>
</comment>
<comment type="similarity">
    <text evidence="1">Belongs to the CsrA/RsmA family.</text>
</comment>
<name>CSRA_LACP7</name>
<accession>A9KSQ2</accession>
<evidence type="ECO:0000255" key="1">
    <source>
        <dbReference type="HAMAP-Rule" id="MF_00167"/>
    </source>
</evidence>
<proteinExistence type="inferred from homology"/>
<keyword id="KW-1005">Bacterial flagellum biogenesis</keyword>
<keyword id="KW-0963">Cytoplasm</keyword>
<keyword id="KW-1185">Reference proteome</keyword>
<keyword id="KW-0678">Repressor</keyword>
<keyword id="KW-0694">RNA-binding</keyword>
<keyword id="KW-0810">Translation regulation</keyword>
<protein>
    <recommendedName>
        <fullName evidence="1">Translational regulator CsrA</fullName>
    </recommendedName>
</protein>
<organism>
    <name type="scientific">Lachnoclostridium phytofermentans (strain ATCC 700394 / DSM 18823 / ISDg)</name>
    <name type="common">Clostridium phytofermentans</name>
    <dbReference type="NCBI Taxonomy" id="357809"/>
    <lineage>
        <taxon>Bacteria</taxon>
        <taxon>Bacillati</taxon>
        <taxon>Bacillota</taxon>
        <taxon>Clostridia</taxon>
        <taxon>Lachnospirales</taxon>
        <taxon>Lachnospiraceae</taxon>
    </lineage>
</organism>
<reference key="1">
    <citation type="submission" date="2007-11" db="EMBL/GenBank/DDBJ databases">
        <title>Complete genome sequence of Clostridium phytofermentans ISDg.</title>
        <authorList>
            <person name="Leschine S.B."/>
            <person name="Warnick T.A."/>
            <person name="Blanchard J.L."/>
            <person name="Schnell D.J."/>
            <person name="Petit E.L."/>
            <person name="LaTouf W.G."/>
            <person name="Copeland A."/>
            <person name="Lucas S."/>
            <person name="Lapidus A."/>
            <person name="Barry K."/>
            <person name="Glavina del Rio T."/>
            <person name="Dalin E."/>
            <person name="Tice H."/>
            <person name="Pitluck S."/>
            <person name="Kiss H."/>
            <person name="Brettin T."/>
            <person name="Bruce D."/>
            <person name="Detter J.C."/>
            <person name="Han C."/>
            <person name="Kuske C."/>
            <person name="Schmutz J."/>
            <person name="Larimer F."/>
            <person name="Land M."/>
            <person name="Hauser L."/>
            <person name="Kyrpides N."/>
            <person name="Kim E.A."/>
            <person name="Richardson P."/>
        </authorList>
    </citation>
    <scope>NUCLEOTIDE SEQUENCE [LARGE SCALE GENOMIC DNA]</scope>
    <source>
        <strain>ATCC 700394 / DSM 18823 / ISDg</strain>
    </source>
</reference>